<evidence type="ECO:0000255" key="1">
    <source>
        <dbReference type="HAMAP-Rule" id="MF_00163"/>
    </source>
</evidence>
<accession>Q3B2U9</accession>
<comment type="function">
    <text evidence="1">Removes the formyl group from the N-terminal Met of newly synthesized proteins. Requires at least a dipeptide for an efficient rate of reaction. N-terminal L-methionine is a prerequisite for activity but the enzyme has broad specificity at other positions.</text>
</comment>
<comment type="catalytic activity">
    <reaction evidence="1">
        <text>N-terminal N-formyl-L-methionyl-[peptide] + H2O = N-terminal L-methionyl-[peptide] + formate</text>
        <dbReference type="Rhea" id="RHEA:24420"/>
        <dbReference type="Rhea" id="RHEA-COMP:10639"/>
        <dbReference type="Rhea" id="RHEA-COMP:10640"/>
        <dbReference type="ChEBI" id="CHEBI:15377"/>
        <dbReference type="ChEBI" id="CHEBI:15740"/>
        <dbReference type="ChEBI" id="CHEBI:49298"/>
        <dbReference type="ChEBI" id="CHEBI:64731"/>
        <dbReference type="EC" id="3.5.1.88"/>
    </reaction>
</comment>
<comment type="cofactor">
    <cofactor evidence="1">
        <name>Fe(2+)</name>
        <dbReference type="ChEBI" id="CHEBI:29033"/>
    </cofactor>
    <text evidence="1">Binds 1 Fe(2+) ion.</text>
</comment>
<comment type="similarity">
    <text evidence="1">Belongs to the polypeptide deformylase family.</text>
</comment>
<sequence length="190" mass="21026">MILPINTYSDEVLHQKAKPLKGVDADISSLIDSMFESMENASGIGLAAPQVGCSIRLLVLDVSCMKSYEDVPPMVVINPNVLAVRGKNLMEEGCLSVPGVQGDVLRPSEITLKYRDRNFQEHTEEFSGMLARVLQHEIDHLNGTLFVDRMEKRDRRRIQQELDDIAAGLVPADYPIARECSRGGEGPACM</sequence>
<proteinExistence type="inferred from homology"/>
<dbReference type="EC" id="3.5.1.88" evidence="1"/>
<dbReference type="EMBL" id="CP000096">
    <property type="protein sequence ID" value="ABB24332.1"/>
    <property type="molecule type" value="Genomic_DNA"/>
</dbReference>
<dbReference type="RefSeq" id="WP_011358204.1">
    <property type="nucleotide sequence ID" value="NC_007512.1"/>
</dbReference>
<dbReference type="SMR" id="Q3B2U9"/>
<dbReference type="STRING" id="319225.Plut_1473"/>
<dbReference type="KEGG" id="plt:Plut_1473"/>
<dbReference type="eggNOG" id="COG0242">
    <property type="taxonomic scope" value="Bacteria"/>
</dbReference>
<dbReference type="HOGENOM" id="CLU_061901_2_0_10"/>
<dbReference type="OrthoDB" id="9784988at2"/>
<dbReference type="Proteomes" id="UP000002709">
    <property type="component" value="Chromosome"/>
</dbReference>
<dbReference type="GO" id="GO:0046872">
    <property type="term" value="F:metal ion binding"/>
    <property type="evidence" value="ECO:0007669"/>
    <property type="project" value="UniProtKB-KW"/>
</dbReference>
<dbReference type="GO" id="GO:0042586">
    <property type="term" value="F:peptide deformylase activity"/>
    <property type="evidence" value="ECO:0007669"/>
    <property type="project" value="UniProtKB-UniRule"/>
</dbReference>
<dbReference type="GO" id="GO:0043686">
    <property type="term" value="P:co-translational protein modification"/>
    <property type="evidence" value="ECO:0007669"/>
    <property type="project" value="TreeGrafter"/>
</dbReference>
<dbReference type="GO" id="GO:0006412">
    <property type="term" value="P:translation"/>
    <property type="evidence" value="ECO:0007669"/>
    <property type="project" value="UniProtKB-UniRule"/>
</dbReference>
<dbReference type="CDD" id="cd00487">
    <property type="entry name" value="Pep_deformylase"/>
    <property type="match status" value="1"/>
</dbReference>
<dbReference type="Gene3D" id="3.90.45.10">
    <property type="entry name" value="Peptide deformylase"/>
    <property type="match status" value="1"/>
</dbReference>
<dbReference type="HAMAP" id="MF_00163">
    <property type="entry name" value="Pep_deformylase"/>
    <property type="match status" value="1"/>
</dbReference>
<dbReference type="InterPro" id="IPR023635">
    <property type="entry name" value="Peptide_deformylase"/>
</dbReference>
<dbReference type="InterPro" id="IPR036821">
    <property type="entry name" value="Peptide_deformylase_sf"/>
</dbReference>
<dbReference type="NCBIfam" id="TIGR00079">
    <property type="entry name" value="pept_deformyl"/>
    <property type="match status" value="1"/>
</dbReference>
<dbReference type="NCBIfam" id="NF001159">
    <property type="entry name" value="PRK00150.1-3"/>
    <property type="match status" value="1"/>
</dbReference>
<dbReference type="PANTHER" id="PTHR10458">
    <property type="entry name" value="PEPTIDE DEFORMYLASE"/>
    <property type="match status" value="1"/>
</dbReference>
<dbReference type="PANTHER" id="PTHR10458:SF22">
    <property type="entry name" value="PEPTIDE DEFORMYLASE"/>
    <property type="match status" value="1"/>
</dbReference>
<dbReference type="Pfam" id="PF01327">
    <property type="entry name" value="Pep_deformylase"/>
    <property type="match status" value="1"/>
</dbReference>
<dbReference type="PIRSF" id="PIRSF004749">
    <property type="entry name" value="Pep_def"/>
    <property type="match status" value="1"/>
</dbReference>
<dbReference type="PRINTS" id="PR01576">
    <property type="entry name" value="PDEFORMYLASE"/>
</dbReference>
<dbReference type="SUPFAM" id="SSF56420">
    <property type="entry name" value="Peptide deformylase"/>
    <property type="match status" value="1"/>
</dbReference>
<protein>
    <recommendedName>
        <fullName evidence="1">Peptide deformylase</fullName>
        <shortName evidence="1">PDF</shortName>
        <ecNumber evidence="1">3.5.1.88</ecNumber>
    </recommendedName>
    <alternativeName>
        <fullName evidence="1">Polypeptide deformylase</fullName>
    </alternativeName>
</protein>
<gene>
    <name evidence="1" type="primary">def</name>
    <name type="ordered locus">Plut_1473</name>
</gene>
<name>DEF_CHLL3</name>
<feature type="chain" id="PRO_0000301076" description="Peptide deformylase">
    <location>
        <begin position="1"/>
        <end position="190"/>
    </location>
</feature>
<feature type="active site" evidence="1">
    <location>
        <position position="137"/>
    </location>
</feature>
<feature type="binding site" evidence="1">
    <location>
        <position position="94"/>
    </location>
    <ligand>
        <name>Fe cation</name>
        <dbReference type="ChEBI" id="CHEBI:24875"/>
    </ligand>
</feature>
<feature type="binding site" evidence="1">
    <location>
        <position position="136"/>
    </location>
    <ligand>
        <name>Fe cation</name>
        <dbReference type="ChEBI" id="CHEBI:24875"/>
    </ligand>
</feature>
<feature type="binding site" evidence="1">
    <location>
        <position position="140"/>
    </location>
    <ligand>
        <name>Fe cation</name>
        <dbReference type="ChEBI" id="CHEBI:24875"/>
    </ligand>
</feature>
<reference key="1">
    <citation type="submission" date="2005-08" db="EMBL/GenBank/DDBJ databases">
        <title>Complete sequence of Pelodictyon luteolum DSM 273.</title>
        <authorList>
            <consortium name="US DOE Joint Genome Institute"/>
            <person name="Copeland A."/>
            <person name="Lucas S."/>
            <person name="Lapidus A."/>
            <person name="Barry K."/>
            <person name="Detter J.C."/>
            <person name="Glavina T."/>
            <person name="Hammon N."/>
            <person name="Israni S."/>
            <person name="Pitluck S."/>
            <person name="Bryant D."/>
            <person name="Schmutz J."/>
            <person name="Larimer F."/>
            <person name="Land M."/>
            <person name="Kyrpides N."/>
            <person name="Ivanova N."/>
            <person name="Richardson P."/>
        </authorList>
    </citation>
    <scope>NUCLEOTIDE SEQUENCE [LARGE SCALE GENOMIC DNA]</scope>
    <source>
        <strain>DSM 273 / BCRC 81028 / 2530</strain>
    </source>
</reference>
<organism>
    <name type="scientific">Chlorobium luteolum (strain DSM 273 / BCRC 81028 / 2530)</name>
    <name type="common">Pelodictyon luteolum</name>
    <dbReference type="NCBI Taxonomy" id="319225"/>
    <lineage>
        <taxon>Bacteria</taxon>
        <taxon>Pseudomonadati</taxon>
        <taxon>Chlorobiota</taxon>
        <taxon>Chlorobiia</taxon>
        <taxon>Chlorobiales</taxon>
        <taxon>Chlorobiaceae</taxon>
        <taxon>Chlorobium/Pelodictyon group</taxon>
        <taxon>Pelodictyon</taxon>
    </lineage>
</organism>
<keyword id="KW-0378">Hydrolase</keyword>
<keyword id="KW-0408">Iron</keyword>
<keyword id="KW-0479">Metal-binding</keyword>
<keyword id="KW-0648">Protein biosynthesis</keyword>
<keyword id="KW-1185">Reference proteome</keyword>